<keyword id="KW-0067">ATP-binding</keyword>
<keyword id="KW-0963">Cytoplasm</keyword>
<keyword id="KW-0436">Ligase</keyword>
<keyword id="KW-0547">Nucleotide-binding</keyword>
<keyword id="KW-0566">Pantothenate biosynthesis</keyword>
<feature type="chain" id="PRO_1000097078" description="Pantothenate synthetase">
    <location>
        <begin position="1"/>
        <end position="284"/>
    </location>
</feature>
<feature type="active site" description="Proton donor" evidence="1">
    <location>
        <position position="37"/>
    </location>
</feature>
<feature type="binding site" evidence="1">
    <location>
        <begin position="30"/>
        <end position="37"/>
    </location>
    <ligand>
        <name>ATP</name>
        <dbReference type="ChEBI" id="CHEBI:30616"/>
    </ligand>
</feature>
<feature type="binding site" evidence="1">
    <location>
        <position position="61"/>
    </location>
    <ligand>
        <name>(R)-pantoate</name>
        <dbReference type="ChEBI" id="CHEBI:15980"/>
    </ligand>
</feature>
<feature type="binding site" evidence="1">
    <location>
        <position position="61"/>
    </location>
    <ligand>
        <name>beta-alanine</name>
        <dbReference type="ChEBI" id="CHEBI:57966"/>
    </ligand>
</feature>
<feature type="binding site" evidence="1">
    <location>
        <begin position="149"/>
        <end position="152"/>
    </location>
    <ligand>
        <name>ATP</name>
        <dbReference type="ChEBI" id="CHEBI:30616"/>
    </ligand>
</feature>
<feature type="binding site" evidence="1">
    <location>
        <position position="155"/>
    </location>
    <ligand>
        <name>(R)-pantoate</name>
        <dbReference type="ChEBI" id="CHEBI:15980"/>
    </ligand>
</feature>
<feature type="binding site" evidence="1">
    <location>
        <position position="178"/>
    </location>
    <ligand>
        <name>ATP</name>
        <dbReference type="ChEBI" id="CHEBI:30616"/>
    </ligand>
</feature>
<feature type="binding site" evidence="1">
    <location>
        <begin position="186"/>
        <end position="189"/>
    </location>
    <ligand>
        <name>ATP</name>
        <dbReference type="ChEBI" id="CHEBI:30616"/>
    </ligand>
</feature>
<sequence length="284" mass="31532">MLIIESVLLLRQHIRRLRQEGKRIALVPTMGNLHDGHMKLVDEAKASADVVVVSIFVNPMQFDRVDDLARYPRTLQDDCEKLNKRHVDFVFAPTPAEVYPQGTEGQTYVDVPGLSTMLEGASRPGHFRGVSTIVSKLFNLVQPDVACFGEKDFQQLALIRKMVADMGYDIEIIGVPIVRAKDGLALSSRNGYLTADQRKIAPGLYKVLSAVAEKLAAGDRQLDEIIAIAEQELNEKGFRADDIQIRDADTLLELTDASQRAVILMAAWLGQARLIDNRIVTLAQ</sequence>
<dbReference type="EC" id="6.3.2.1" evidence="1"/>
<dbReference type="EMBL" id="CP000647">
    <property type="protein sequence ID" value="ABR75600.1"/>
    <property type="molecule type" value="Genomic_DNA"/>
</dbReference>
<dbReference type="RefSeq" id="WP_002888835.1">
    <property type="nucleotide sequence ID" value="NC_009648.1"/>
</dbReference>
<dbReference type="SMR" id="A6T4S9"/>
<dbReference type="STRING" id="272620.KPN_00140"/>
<dbReference type="jPOST" id="A6T4S9"/>
<dbReference type="PaxDb" id="272620-KPN_00140"/>
<dbReference type="EnsemblBacteria" id="ABR75600">
    <property type="protein sequence ID" value="ABR75600"/>
    <property type="gene ID" value="KPN_00140"/>
</dbReference>
<dbReference type="KEGG" id="kpn:KPN_00140"/>
<dbReference type="HOGENOM" id="CLU_047148_0_0_6"/>
<dbReference type="UniPathway" id="UPA00028">
    <property type="reaction ID" value="UER00005"/>
</dbReference>
<dbReference type="Proteomes" id="UP000000265">
    <property type="component" value="Chromosome"/>
</dbReference>
<dbReference type="GO" id="GO:0005829">
    <property type="term" value="C:cytosol"/>
    <property type="evidence" value="ECO:0007669"/>
    <property type="project" value="TreeGrafter"/>
</dbReference>
<dbReference type="GO" id="GO:0005524">
    <property type="term" value="F:ATP binding"/>
    <property type="evidence" value="ECO:0007669"/>
    <property type="project" value="UniProtKB-KW"/>
</dbReference>
<dbReference type="GO" id="GO:0004592">
    <property type="term" value="F:pantoate-beta-alanine ligase activity"/>
    <property type="evidence" value="ECO:0007669"/>
    <property type="project" value="UniProtKB-UniRule"/>
</dbReference>
<dbReference type="GO" id="GO:0015940">
    <property type="term" value="P:pantothenate biosynthetic process"/>
    <property type="evidence" value="ECO:0007669"/>
    <property type="project" value="UniProtKB-UniRule"/>
</dbReference>
<dbReference type="CDD" id="cd00560">
    <property type="entry name" value="PanC"/>
    <property type="match status" value="1"/>
</dbReference>
<dbReference type="FunFam" id="3.30.1300.10:FF:000001">
    <property type="entry name" value="Pantothenate synthetase"/>
    <property type="match status" value="1"/>
</dbReference>
<dbReference type="FunFam" id="3.40.50.620:FF:000013">
    <property type="entry name" value="Pantothenate synthetase"/>
    <property type="match status" value="1"/>
</dbReference>
<dbReference type="Gene3D" id="3.40.50.620">
    <property type="entry name" value="HUPs"/>
    <property type="match status" value="1"/>
</dbReference>
<dbReference type="Gene3D" id="3.30.1300.10">
    <property type="entry name" value="Pantoate-beta-alanine ligase, C-terminal domain"/>
    <property type="match status" value="1"/>
</dbReference>
<dbReference type="HAMAP" id="MF_00158">
    <property type="entry name" value="PanC"/>
    <property type="match status" value="1"/>
</dbReference>
<dbReference type="InterPro" id="IPR003721">
    <property type="entry name" value="Pantoate_ligase"/>
</dbReference>
<dbReference type="InterPro" id="IPR042176">
    <property type="entry name" value="Pantoate_ligase_C"/>
</dbReference>
<dbReference type="InterPro" id="IPR014729">
    <property type="entry name" value="Rossmann-like_a/b/a_fold"/>
</dbReference>
<dbReference type="NCBIfam" id="TIGR00018">
    <property type="entry name" value="panC"/>
    <property type="match status" value="1"/>
</dbReference>
<dbReference type="PANTHER" id="PTHR21299">
    <property type="entry name" value="CYTIDYLATE KINASE/PANTOATE-BETA-ALANINE LIGASE"/>
    <property type="match status" value="1"/>
</dbReference>
<dbReference type="PANTHER" id="PTHR21299:SF1">
    <property type="entry name" value="PANTOATE--BETA-ALANINE LIGASE"/>
    <property type="match status" value="1"/>
</dbReference>
<dbReference type="Pfam" id="PF02569">
    <property type="entry name" value="Pantoate_ligase"/>
    <property type="match status" value="1"/>
</dbReference>
<dbReference type="SUPFAM" id="SSF52374">
    <property type="entry name" value="Nucleotidylyl transferase"/>
    <property type="match status" value="1"/>
</dbReference>
<comment type="function">
    <text evidence="1">Catalyzes the condensation of pantoate with beta-alanine in an ATP-dependent reaction via a pantoyl-adenylate intermediate.</text>
</comment>
<comment type="catalytic activity">
    <reaction evidence="1">
        <text>(R)-pantoate + beta-alanine + ATP = (R)-pantothenate + AMP + diphosphate + H(+)</text>
        <dbReference type="Rhea" id="RHEA:10912"/>
        <dbReference type="ChEBI" id="CHEBI:15378"/>
        <dbReference type="ChEBI" id="CHEBI:15980"/>
        <dbReference type="ChEBI" id="CHEBI:29032"/>
        <dbReference type="ChEBI" id="CHEBI:30616"/>
        <dbReference type="ChEBI" id="CHEBI:33019"/>
        <dbReference type="ChEBI" id="CHEBI:57966"/>
        <dbReference type="ChEBI" id="CHEBI:456215"/>
        <dbReference type="EC" id="6.3.2.1"/>
    </reaction>
</comment>
<comment type="pathway">
    <text evidence="1">Cofactor biosynthesis; (R)-pantothenate biosynthesis; (R)-pantothenate from (R)-pantoate and beta-alanine: step 1/1.</text>
</comment>
<comment type="subunit">
    <text evidence="1">Homodimer.</text>
</comment>
<comment type="subcellular location">
    <subcellularLocation>
        <location evidence="1">Cytoplasm</location>
    </subcellularLocation>
</comment>
<comment type="miscellaneous">
    <text evidence="1">The reaction proceeds by a bi uni uni bi ping pong mechanism.</text>
</comment>
<comment type="similarity">
    <text evidence="1">Belongs to the pantothenate synthetase family.</text>
</comment>
<organism>
    <name type="scientific">Klebsiella pneumoniae subsp. pneumoniae (strain ATCC 700721 / MGH 78578)</name>
    <dbReference type="NCBI Taxonomy" id="272620"/>
    <lineage>
        <taxon>Bacteria</taxon>
        <taxon>Pseudomonadati</taxon>
        <taxon>Pseudomonadota</taxon>
        <taxon>Gammaproteobacteria</taxon>
        <taxon>Enterobacterales</taxon>
        <taxon>Enterobacteriaceae</taxon>
        <taxon>Klebsiella/Raoultella group</taxon>
        <taxon>Klebsiella</taxon>
        <taxon>Klebsiella pneumoniae complex</taxon>
    </lineage>
</organism>
<reference key="1">
    <citation type="submission" date="2006-09" db="EMBL/GenBank/DDBJ databases">
        <authorList>
            <consortium name="The Klebsiella pneumonia Genome Sequencing Project"/>
            <person name="McClelland M."/>
            <person name="Sanderson E.K."/>
            <person name="Spieth J."/>
            <person name="Clifton W.S."/>
            <person name="Latreille P."/>
            <person name="Sabo A."/>
            <person name="Pepin K."/>
            <person name="Bhonagiri V."/>
            <person name="Porwollik S."/>
            <person name="Ali J."/>
            <person name="Wilson R.K."/>
        </authorList>
    </citation>
    <scope>NUCLEOTIDE SEQUENCE [LARGE SCALE GENOMIC DNA]</scope>
    <source>
        <strain>ATCC 700721 / MGH 78578</strain>
    </source>
</reference>
<gene>
    <name evidence="1" type="primary">panC</name>
    <name type="ordered locus">KPN78578_01390</name>
    <name type="ORF">KPN_00140</name>
</gene>
<protein>
    <recommendedName>
        <fullName evidence="1">Pantothenate synthetase</fullName>
        <shortName evidence="1">PS</shortName>
        <ecNumber evidence="1">6.3.2.1</ecNumber>
    </recommendedName>
    <alternativeName>
        <fullName evidence="1">Pantoate--beta-alanine ligase</fullName>
    </alternativeName>
    <alternativeName>
        <fullName evidence="1">Pantoate-activating enzyme</fullName>
    </alternativeName>
</protein>
<name>PANC_KLEP7</name>
<evidence type="ECO:0000255" key="1">
    <source>
        <dbReference type="HAMAP-Rule" id="MF_00158"/>
    </source>
</evidence>
<accession>A6T4S9</accession>
<proteinExistence type="inferred from homology"/>